<proteinExistence type="evidence at transcript level"/>
<comment type="function">
    <text evidence="3">Ion channel inhibitor.</text>
</comment>
<comment type="subcellular location">
    <subcellularLocation>
        <location evidence="1">Secreted</location>
    </subcellularLocation>
</comment>
<comment type="tissue specificity">
    <text>Expressed by the venom gland.</text>
</comment>
<comment type="domain">
    <text evidence="1">The presence of a 'disulfide through disulfide knot' structurally defines this protein as a knottin.</text>
</comment>
<comment type="similarity">
    <text>Belongs to the neurotoxin 25 family. ICK-8 subfamily.</text>
</comment>
<keyword id="KW-1015">Disulfide bond</keyword>
<keyword id="KW-0872">Ion channel impairing toxin</keyword>
<keyword id="KW-0960">Knottin</keyword>
<keyword id="KW-0964">Secreted</keyword>
<keyword id="KW-0732">Signal</keyword>
<keyword id="KW-0800">Toxin</keyword>
<organism>
    <name type="scientific">Trittame loki</name>
    <name type="common">Brush-footed trapdoor spider</name>
    <dbReference type="NCBI Taxonomy" id="1295018"/>
    <lineage>
        <taxon>Eukaryota</taxon>
        <taxon>Metazoa</taxon>
        <taxon>Ecdysozoa</taxon>
        <taxon>Arthropoda</taxon>
        <taxon>Chelicerata</taxon>
        <taxon>Arachnida</taxon>
        <taxon>Araneae</taxon>
        <taxon>Mygalomorphae</taxon>
        <taxon>Barychelidae</taxon>
        <taxon>Trittame</taxon>
    </lineage>
</organism>
<feature type="signal peptide" evidence="2">
    <location>
        <begin position="1"/>
        <end position="19"/>
    </location>
</feature>
<feature type="chain" id="PRO_0000429215" description="Toxin ICK-8">
    <location>
        <begin position="20"/>
        <end position="119"/>
    </location>
</feature>
<feature type="disulfide bond" evidence="1">
    <location>
        <begin position="59"/>
        <end position="74"/>
    </location>
</feature>
<feature type="disulfide bond" evidence="1">
    <location>
        <begin position="67"/>
        <end position="80"/>
    </location>
</feature>
<feature type="disulfide bond" evidence="1">
    <location>
        <begin position="71"/>
        <end position="116"/>
    </location>
</feature>
<feature type="disulfide bond" evidence="1">
    <location>
        <begin position="73"/>
        <end position="87"/>
    </location>
</feature>
<dbReference type="EMBL" id="GAQE01000011">
    <property type="protein sequence ID" value="JAB84543.1"/>
    <property type="molecule type" value="Transcribed_RNA"/>
</dbReference>
<dbReference type="SMR" id="W4VSI8"/>
<dbReference type="ArachnoServer" id="AS001781">
    <property type="toxin name" value="U1-barytoxin-Tl1c"/>
</dbReference>
<dbReference type="GO" id="GO:0005576">
    <property type="term" value="C:extracellular region"/>
    <property type="evidence" value="ECO:0007669"/>
    <property type="project" value="UniProtKB-SubCell"/>
</dbReference>
<dbReference type="GO" id="GO:0099106">
    <property type="term" value="F:ion channel regulator activity"/>
    <property type="evidence" value="ECO:0007669"/>
    <property type="project" value="UniProtKB-KW"/>
</dbReference>
<dbReference type="GO" id="GO:0090729">
    <property type="term" value="F:toxin activity"/>
    <property type="evidence" value="ECO:0007669"/>
    <property type="project" value="UniProtKB-KW"/>
</dbReference>
<accession>W4VSI8</accession>
<protein>
    <recommendedName>
        <fullName>Toxin ICK-8</fullName>
    </recommendedName>
</protein>
<name>ICK8_TRILK</name>
<reference key="1">
    <citation type="journal article" date="2013" name="Toxins">
        <title>A proteomics and transcriptomics investigation of the venom from the barychelid spider Trittame loki (brush-foot trapdoor).</title>
        <authorList>
            <person name="Undheim E.A."/>
            <person name="Sunagar K."/>
            <person name="Herzig V."/>
            <person name="Kely L."/>
            <person name="Low D.H."/>
            <person name="Jackson T.N."/>
            <person name="Jones A."/>
            <person name="Kurniawan N."/>
            <person name="King G.F."/>
            <person name="Ali S.A."/>
            <person name="Antunes A."/>
            <person name="Ruder T."/>
            <person name="Fry B.G."/>
        </authorList>
    </citation>
    <scope>NUCLEOTIDE SEQUENCE [MRNA]</scope>
    <source>
        <tissue>Venom gland</tissue>
    </source>
</reference>
<evidence type="ECO:0000250" key="1"/>
<evidence type="ECO:0000255" key="2"/>
<evidence type="ECO:0000305" key="3"/>
<sequence>MMKLYSLVIIATLAAAAFAATSEEISAAVSEIISQHQEDLERYAKIVERGEEPKKYIRCSKQLGQSCYLNCECCGASAVCEDIKYICKDKVSDNSILDAMGKAWNAVGNSISRYYCSAE</sequence>